<evidence type="ECO:0000255" key="1">
    <source>
        <dbReference type="HAMAP-Rule" id="MF_00133"/>
    </source>
</evidence>
<feature type="chain" id="PRO_1000095783" description="Tryptophan synthase beta chain">
    <location>
        <begin position="1"/>
        <end position="405"/>
    </location>
</feature>
<feature type="modified residue" description="N6-(pyridoxal phosphate)lysine" evidence="1">
    <location>
        <position position="96"/>
    </location>
</feature>
<organism>
    <name type="scientific">Clostridium botulinum (strain Eklund 17B / Type B)</name>
    <dbReference type="NCBI Taxonomy" id="935198"/>
    <lineage>
        <taxon>Bacteria</taxon>
        <taxon>Bacillati</taxon>
        <taxon>Bacillota</taxon>
        <taxon>Clostridia</taxon>
        <taxon>Eubacteriales</taxon>
        <taxon>Clostridiaceae</taxon>
        <taxon>Clostridium</taxon>
    </lineage>
</organism>
<name>TRPB_CLOBB</name>
<keyword id="KW-0028">Amino-acid biosynthesis</keyword>
<keyword id="KW-0057">Aromatic amino acid biosynthesis</keyword>
<keyword id="KW-0456">Lyase</keyword>
<keyword id="KW-0663">Pyridoxal phosphate</keyword>
<keyword id="KW-0822">Tryptophan biosynthesis</keyword>
<protein>
    <recommendedName>
        <fullName evidence="1">Tryptophan synthase beta chain</fullName>
        <ecNumber evidence="1">4.2.1.20</ecNumber>
    </recommendedName>
</protein>
<sequence length="405" mass="44770">MDFRTYLKKYPDKNGRFGQYGGAYLTAELIPAFEEIADAYQTICHSSQFINELRRIRKEFQGRPTPVYHCERLSRAIGNCQIYLKREDLNHTGAHKLNHCMGEGLLAKFMGKKRLIAETGAGQHGVALATAAAFFGLECEIHMGEVDIAKQAPNVTRMKILGAKVVPVTHGLKTLKEAVDSAFDSYAKNYKDSIYCIGSALGPHPFPLMVRDFQAVVGYEAKDQFKEMTGFLPDVVTACVGGGSNAAGMFIPFLEEPVDIIGIEPLGRGEKLGDHAASMKYGEKGVMHGFESIMLKDKNGDPAPVYSIASGLDYPSVGPEHAFLRELGRVDYKVINDEEAMEAFFKLSRYEGIIPAIESSHAVAYAMKKAEEMKQGSILVCLSGRGDKDIDYIVEHYGYGEQYFK</sequence>
<dbReference type="EC" id="4.2.1.20" evidence="1"/>
<dbReference type="EMBL" id="CP001056">
    <property type="protein sequence ID" value="ACD23594.1"/>
    <property type="molecule type" value="Genomic_DNA"/>
</dbReference>
<dbReference type="SMR" id="B2TM49"/>
<dbReference type="KEGG" id="cbk:CLL_A1973"/>
<dbReference type="PATRIC" id="fig|935198.13.peg.1925"/>
<dbReference type="HOGENOM" id="CLU_016734_3_1_9"/>
<dbReference type="UniPathway" id="UPA00035">
    <property type="reaction ID" value="UER00044"/>
</dbReference>
<dbReference type="Proteomes" id="UP000001195">
    <property type="component" value="Chromosome"/>
</dbReference>
<dbReference type="GO" id="GO:0005737">
    <property type="term" value="C:cytoplasm"/>
    <property type="evidence" value="ECO:0007669"/>
    <property type="project" value="TreeGrafter"/>
</dbReference>
<dbReference type="GO" id="GO:0004834">
    <property type="term" value="F:tryptophan synthase activity"/>
    <property type="evidence" value="ECO:0007669"/>
    <property type="project" value="UniProtKB-UniRule"/>
</dbReference>
<dbReference type="CDD" id="cd06446">
    <property type="entry name" value="Trp-synth_B"/>
    <property type="match status" value="1"/>
</dbReference>
<dbReference type="FunFam" id="3.40.50.1100:FF:000004">
    <property type="entry name" value="Tryptophan synthase beta chain"/>
    <property type="match status" value="1"/>
</dbReference>
<dbReference type="Gene3D" id="3.40.50.1100">
    <property type="match status" value="2"/>
</dbReference>
<dbReference type="HAMAP" id="MF_00133">
    <property type="entry name" value="Trp_synth_beta"/>
    <property type="match status" value="1"/>
</dbReference>
<dbReference type="InterPro" id="IPR006653">
    <property type="entry name" value="Trp_synth_b_CS"/>
</dbReference>
<dbReference type="InterPro" id="IPR006654">
    <property type="entry name" value="Trp_synth_beta"/>
</dbReference>
<dbReference type="InterPro" id="IPR023026">
    <property type="entry name" value="Trp_synth_beta/beta-like"/>
</dbReference>
<dbReference type="InterPro" id="IPR001926">
    <property type="entry name" value="TrpB-like_PALP"/>
</dbReference>
<dbReference type="InterPro" id="IPR036052">
    <property type="entry name" value="TrpB-like_PALP_sf"/>
</dbReference>
<dbReference type="NCBIfam" id="TIGR00263">
    <property type="entry name" value="trpB"/>
    <property type="match status" value="1"/>
</dbReference>
<dbReference type="PANTHER" id="PTHR48077:SF3">
    <property type="entry name" value="TRYPTOPHAN SYNTHASE"/>
    <property type="match status" value="1"/>
</dbReference>
<dbReference type="PANTHER" id="PTHR48077">
    <property type="entry name" value="TRYPTOPHAN SYNTHASE-RELATED"/>
    <property type="match status" value="1"/>
</dbReference>
<dbReference type="Pfam" id="PF00291">
    <property type="entry name" value="PALP"/>
    <property type="match status" value="1"/>
</dbReference>
<dbReference type="PIRSF" id="PIRSF001413">
    <property type="entry name" value="Trp_syn_beta"/>
    <property type="match status" value="1"/>
</dbReference>
<dbReference type="SUPFAM" id="SSF53686">
    <property type="entry name" value="Tryptophan synthase beta subunit-like PLP-dependent enzymes"/>
    <property type="match status" value="1"/>
</dbReference>
<dbReference type="PROSITE" id="PS00168">
    <property type="entry name" value="TRP_SYNTHASE_BETA"/>
    <property type="match status" value="1"/>
</dbReference>
<gene>
    <name evidence="1" type="primary">trpB</name>
    <name type="ordered locus">CLL_A1973</name>
</gene>
<comment type="function">
    <text evidence="1">The beta subunit is responsible for the synthesis of L-tryptophan from indole and L-serine.</text>
</comment>
<comment type="catalytic activity">
    <reaction evidence="1">
        <text>(1S,2R)-1-C-(indol-3-yl)glycerol 3-phosphate + L-serine = D-glyceraldehyde 3-phosphate + L-tryptophan + H2O</text>
        <dbReference type="Rhea" id="RHEA:10532"/>
        <dbReference type="ChEBI" id="CHEBI:15377"/>
        <dbReference type="ChEBI" id="CHEBI:33384"/>
        <dbReference type="ChEBI" id="CHEBI:57912"/>
        <dbReference type="ChEBI" id="CHEBI:58866"/>
        <dbReference type="ChEBI" id="CHEBI:59776"/>
        <dbReference type="EC" id="4.2.1.20"/>
    </reaction>
</comment>
<comment type="cofactor">
    <cofactor evidence="1">
        <name>pyridoxal 5'-phosphate</name>
        <dbReference type="ChEBI" id="CHEBI:597326"/>
    </cofactor>
</comment>
<comment type="pathway">
    <text evidence="1">Amino-acid biosynthesis; L-tryptophan biosynthesis; L-tryptophan from chorismate: step 5/5.</text>
</comment>
<comment type="subunit">
    <text evidence="1">Tetramer of two alpha and two beta chains.</text>
</comment>
<comment type="similarity">
    <text evidence="1">Belongs to the TrpB family.</text>
</comment>
<reference key="1">
    <citation type="submission" date="2008-04" db="EMBL/GenBank/DDBJ databases">
        <title>Complete sequence of Clostridium botulinum strain Eklund.</title>
        <authorList>
            <person name="Brinkac L.M."/>
            <person name="Brown J.L."/>
            <person name="Bruce D."/>
            <person name="Detter C."/>
            <person name="Munk C."/>
            <person name="Smith L.A."/>
            <person name="Smith T.J."/>
            <person name="Sutton G."/>
            <person name="Brettin T.S."/>
        </authorList>
    </citation>
    <scope>NUCLEOTIDE SEQUENCE [LARGE SCALE GENOMIC DNA]</scope>
    <source>
        <strain>Eklund 17B / Type B</strain>
    </source>
</reference>
<accession>B2TM49</accession>
<proteinExistence type="inferred from homology"/>